<protein>
    <recommendedName>
        <fullName evidence="1">Bifunctional protein GlmU</fullName>
    </recommendedName>
    <domain>
        <recommendedName>
            <fullName evidence="1">UDP-N-acetylglucosamine pyrophosphorylase</fullName>
            <ecNumber evidence="1">2.7.7.23</ecNumber>
        </recommendedName>
        <alternativeName>
            <fullName evidence="1">N-acetylglucosamine-1-phosphate uridyltransferase</fullName>
        </alternativeName>
    </domain>
    <domain>
        <recommendedName>
            <fullName evidence="1">Glucosamine-1-phosphate N-acetyltransferase</fullName>
            <ecNumber evidence="1">2.3.1.157</ecNumber>
        </recommendedName>
    </domain>
</protein>
<keyword id="KW-0012">Acyltransferase</keyword>
<keyword id="KW-0133">Cell shape</keyword>
<keyword id="KW-0961">Cell wall biogenesis/degradation</keyword>
<keyword id="KW-0963">Cytoplasm</keyword>
<keyword id="KW-0460">Magnesium</keyword>
<keyword id="KW-0479">Metal-binding</keyword>
<keyword id="KW-0511">Multifunctional enzyme</keyword>
<keyword id="KW-0548">Nucleotidyltransferase</keyword>
<keyword id="KW-0573">Peptidoglycan synthesis</keyword>
<keyword id="KW-1185">Reference proteome</keyword>
<keyword id="KW-0677">Repeat</keyword>
<keyword id="KW-0808">Transferase</keyword>
<name>GLMU_GLOC7</name>
<sequence length="451" mass="49477">MVAVAILAAGRGTRMKSNLPKVLHPLGGRSLVERVLESCQLINPEKRLIIIGYQAEAVKQTLEPYEGIEFVEQKEQLGTGHAIIQLIPYLQNFQGDLLVLNGDVPLLRSESLHHLIEIHKTNQNSATILTAHLPHPKGYGRVFCDGNNLVTQIVEERDCTDAQRQNKRVNGGIYCFNWPQLAEVLPKLKPDNDQQEYYLTDVVKYLNSVMAVDVEDYLEISGINDRKQLATAYDILQNRIKDYWMRAGVTLIDPDSITIDDTVELQPDVIIEPQTHLRGQTVIGSGCRIGPGSLIENSKIGENVTVLYAVITDSEVESGCRIGPYAHLRGEAKIKASCRIGNFVEIKKSTVGEKSNVAHLSYLGDATLGDKVNVGAGTITANYDGVKKHPTVIGNNTKTGANSVLVAPVTIGNDVTIAAGSVINKDVPDDSLAIARERQKNISGWRMKTDD</sequence>
<accession>B7KIE0</accession>
<organism>
    <name type="scientific">Gloeothece citriformis (strain PCC 7424)</name>
    <name type="common">Cyanothece sp. (strain PCC 7424)</name>
    <dbReference type="NCBI Taxonomy" id="65393"/>
    <lineage>
        <taxon>Bacteria</taxon>
        <taxon>Bacillati</taxon>
        <taxon>Cyanobacteriota</taxon>
        <taxon>Cyanophyceae</taxon>
        <taxon>Oscillatoriophycideae</taxon>
        <taxon>Chroococcales</taxon>
        <taxon>Aphanothecaceae</taxon>
        <taxon>Gloeothece</taxon>
        <taxon>Gloeothece citriformis</taxon>
    </lineage>
</organism>
<evidence type="ECO:0000255" key="1">
    <source>
        <dbReference type="HAMAP-Rule" id="MF_01631"/>
    </source>
</evidence>
<reference key="1">
    <citation type="journal article" date="2011" name="MBio">
        <title>Novel metabolic attributes of the genus Cyanothece, comprising a group of unicellular nitrogen-fixing Cyanobacteria.</title>
        <authorList>
            <person name="Bandyopadhyay A."/>
            <person name="Elvitigala T."/>
            <person name="Welsh E."/>
            <person name="Stockel J."/>
            <person name="Liberton M."/>
            <person name="Min H."/>
            <person name="Sherman L.A."/>
            <person name="Pakrasi H.B."/>
        </authorList>
    </citation>
    <scope>NUCLEOTIDE SEQUENCE [LARGE SCALE GENOMIC DNA]</scope>
    <source>
        <strain>PCC 7424</strain>
    </source>
</reference>
<feature type="chain" id="PRO_1000186435" description="Bifunctional protein GlmU">
    <location>
        <begin position="1"/>
        <end position="451"/>
    </location>
</feature>
<feature type="region of interest" description="Pyrophosphorylase" evidence="1">
    <location>
        <begin position="1"/>
        <end position="226"/>
    </location>
</feature>
<feature type="region of interest" description="Linker" evidence="1">
    <location>
        <begin position="227"/>
        <end position="247"/>
    </location>
</feature>
<feature type="region of interest" description="N-acetyltransferase" evidence="1">
    <location>
        <begin position="248"/>
        <end position="451"/>
    </location>
</feature>
<feature type="active site" description="Proton acceptor" evidence="1">
    <location>
        <position position="359"/>
    </location>
</feature>
<feature type="binding site" evidence="1">
    <location>
        <begin position="7"/>
        <end position="10"/>
    </location>
    <ligand>
        <name>UDP-N-acetyl-alpha-D-glucosamine</name>
        <dbReference type="ChEBI" id="CHEBI:57705"/>
    </ligand>
</feature>
<feature type="binding site" evidence="1">
    <location>
        <position position="21"/>
    </location>
    <ligand>
        <name>UDP-N-acetyl-alpha-D-glucosamine</name>
        <dbReference type="ChEBI" id="CHEBI:57705"/>
    </ligand>
</feature>
<feature type="binding site" evidence="1">
    <location>
        <position position="73"/>
    </location>
    <ligand>
        <name>UDP-N-acetyl-alpha-D-glucosamine</name>
        <dbReference type="ChEBI" id="CHEBI:57705"/>
    </ligand>
</feature>
<feature type="binding site" evidence="1">
    <location>
        <begin position="78"/>
        <end position="79"/>
    </location>
    <ligand>
        <name>UDP-N-acetyl-alpha-D-glucosamine</name>
        <dbReference type="ChEBI" id="CHEBI:57705"/>
    </ligand>
</feature>
<feature type="binding site" evidence="1">
    <location>
        <position position="103"/>
    </location>
    <ligand>
        <name>Mg(2+)</name>
        <dbReference type="ChEBI" id="CHEBI:18420"/>
    </ligand>
</feature>
<feature type="binding site" evidence="1">
    <location>
        <position position="140"/>
    </location>
    <ligand>
        <name>UDP-N-acetyl-alpha-D-glucosamine</name>
        <dbReference type="ChEBI" id="CHEBI:57705"/>
    </ligand>
</feature>
<feature type="binding site" evidence="1">
    <location>
        <position position="155"/>
    </location>
    <ligand>
        <name>UDP-N-acetyl-alpha-D-glucosamine</name>
        <dbReference type="ChEBI" id="CHEBI:57705"/>
    </ligand>
</feature>
<feature type="binding site" evidence="1">
    <location>
        <position position="170"/>
    </location>
    <ligand>
        <name>UDP-N-acetyl-alpha-D-glucosamine</name>
        <dbReference type="ChEBI" id="CHEBI:57705"/>
    </ligand>
</feature>
<feature type="binding site" evidence="1">
    <location>
        <position position="224"/>
    </location>
    <ligand>
        <name>Mg(2+)</name>
        <dbReference type="ChEBI" id="CHEBI:18420"/>
    </ligand>
</feature>
<feature type="binding site" evidence="1">
    <location>
        <position position="224"/>
    </location>
    <ligand>
        <name>UDP-N-acetyl-alpha-D-glucosamine</name>
        <dbReference type="ChEBI" id="CHEBI:57705"/>
    </ligand>
</feature>
<feature type="binding site" evidence="1">
    <location>
        <position position="329"/>
    </location>
    <ligand>
        <name>UDP-N-acetyl-alpha-D-glucosamine</name>
        <dbReference type="ChEBI" id="CHEBI:57705"/>
    </ligand>
</feature>
<feature type="binding site" evidence="1">
    <location>
        <position position="347"/>
    </location>
    <ligand>
        <name>UDP-N-acetyl-alpha-D-glucosamine</name>
        <dbReference type="ChEBI" id="CHEBI:57705"/>
    </ligand>
</feature>
<feature type="binding site" evidence="1">
    <location>
        <position position="362"/>
    </location>
    <ligand>
        <name>UDP-N-acetyl-alpha-D-glucosamine</name>
        <dbReference type="ChEBI" id="CHEBI:57705"/>
    </ligand>
</feature>
<feature type="binding site" evidence="1">
    <location>
        <position position="373"/>
    </location>
    <ligand>
        <name>UDP-N-acetyl-alpha-D-glucosamine</name>
        <dbReference type="ChEBI" id="CHEBI:57705"/>
    </ligand>
</feature>
<feature type="binding site" evidence="1">
    <location>
        <position position="376"/>
    </location>
    <ligand>
        <name>acetyl-CoA</name>
        <dbReference type="ChEBI" id="CHEBI:57288"/>
    </ligand>
</feature>
<feature type="binding site" evidence="1">
    <location>
        <begin position="382"/>
        <end position="383"/>
    </location>
    <ligand>
        <name>acetyl-CoA</name>
        <dbReference type="ChEBI" id="CHEBI:57288"/>
    </ligand>
</feature>
<feature type="binding site" evidence="1">
    <location>
        <position position="419"/>
    </location>
    <ligand>
        <name>acetyl-CoA</name>
        <dbReference type="ChEBI" id="CHEBI:57288"/>
    </ligand>
</feature>
<feature type="binding site" evidence="1">
    <location>
        <position position="436"/>
    </location>
    <ligand>
        <name>acetyl-CoA</name>
        <dbReference type="ChEBI" id="CHEBI:57288"/>
    </ligand>
</feature>
<proteinExistence type="inferred from homology"/>
<gene>
    <name evidence="1" type="primary">glmU</name>
    <name type="ordered locus">PCC7424_5279</name>
</gene>
<dbReference type="EC" id="2.7.7.23" evidence="1"/>
<dbReference type="EC" id="2.3.1.157" evidence="1"/>
<dbReference type="EMBL" id="CP001291">
    <property type="protein sequence ID" value="ACK73627.1"/>
    <property type="molecule type" value="Genomic_DNA"/>
</dbReference>
<dbReference type="RefSeq" id="WP_015957205.1">
    <property type="nucleotide sequence ID" value="NC_011729.1"/>
</dbReference>
<dbReference type="SMR" id="B7KIE0"/>
<dbReference type="STRING" id="65393.PCC7424_5279"/>
<dbReference type="KEGG" id="cyc:PCC7424_5279"/>
<dbReference type="eggNOG" id="COG1207">
    <property type="taxonomic scope" value="Bacteria"/>
</dbReference>
<dbReference type="HOGENOM" id="CLU_029499_15_2_3"/>
<dbReference type="OrthoDB" id="9775031at2"/>
<dbReference type="UniPathway" id="UPA00113">
    <property type="reaction ID" value="UER00532"/>
</dbReference>
<dbReference type="UniPathway" id="UPA00113">
    <property type="reaction ID" value="UER00533"/>
</dbReference>
<dbReference type="UniPathway" id="UPA00973"/>
<dbReference type="Proteomes" id="UP000002384">
    <property type="component" value="Chromosome"/>
</dbReference>
<dbReference type="GO" id="GO:0031470">
    <property type="term" value="C:carboxysome"/>
    <property type="evidence" value="ECO:0007669"/>
    <property type="project" value="UniProtKB-ARBA"/>
</dbReference>
<dbReference type="GO" id="GO:0005737">
    <property type="term" value="C:cytoplasm"/>
    <property type="evidence" value="ECO:0007669"/>
    <property type="project" value="UniProtKB-SubCell"/>
</dbReference>
<dbReference type="GO" id="GO:0016020">
    <property type="term" value="C:membrane"/>
    <property type="evidence" value="ECO:0007669"/>
    <property type="project" value="GOC"/>
</dbReference>
<dbReference type="GO" id="GO:0019134">
    <property type="term" value="F:glucosamine-1-phosphate N-acetyltransferase activity"/>
    <property type="evidence" value="ECO:0007669"/>
    <property type="project" value="UniProtKB-UniRule"/>
</dbReference>
<dbReference type="GO" id="GO:0000287">
    <property type="term" value="F:magnesium ion binding"/>
    <property type="evidence" value="ECO:0007669"/>
    <property type="project" value="UniProtKB-UniRule"/>
</dbReference>
<dbReference type="GO" id="GO:0043886">
    <property type="term" value="F:structural constituent of carboxysome shell"/>
    <property type="evidence" value="ECO:0007669"/>
    <property type="project" value="UniProtKB-ARBA"/>
</dbReference>
<dbReference type="GO" id="GO:0003977">
    <property type="term" value="F:UDP-N-acetylglucosamine diphosphorylase activity"/>
    <property type="evidence" value="ECO:0007669"/>
    <property type="project" value="UniProtKB-UniRule"/>
</dbReference>
<dbReference type="GO" id="GO:0000902">
    <property type="term" value="P:cell morphogenesis"/>
    <property type="evidence" value="ECO:0007669"/>
    <property type="project" value="UniProtKB-UniRule"/>
</dbReference>
<dbReference type="GO" id="GO:0071555">
    <property type="term" value="P:cell wall organization"/>
    <property type="evidence" value="ECO:0007669"/>
    <property type="project" value="UniProtKB-KW"/>
</dbReference>
<dbReference type="GO" id="GO:0009245">
    <property type="term" value="P:lipid A biosynthetic process"/>
    <property type="evidence" value="ECO:0007669"/>
    <property type="project" value="UniProtKB-UniRule"/>
</dbReference>
<dbReference type="GO" id="GO:0009252">
    <property type="term" value="P:peptidoglycan biosynthetic process"/>
    <property type="evidence" value="ECO:0007669"/>
    <property type="project" value="UniProtKB-UniRule"/>
</dbReference>
<dbReference type="GO" id="GO:0008360">
    <property type="term" value="P:regulation of cell shape"/>
    <property type="evidence" value="ECO:0007669"/>
    <property type="project" value="UniProtKB-KW"/>
</dbReference>
<dbReference type="GO" id="GO:0006048">
    <property type="term" value="P:UDP-N-acetylglucosamine biosynthetic process"/>
    <property type="evidence" value="ECO:0007669"/>
    <property type="project" value="UniProtKB-UniPathway"/>
</dbReference>
<dbReference type="CDD" id="cd02540">
    <property type="entry name" value="GT2_GlmU_N_bac"/>
    <property type="match status" value="1"/>
</dbReference>
<dbReference type="CDD" id="cd03353">
    <property type="entry name" value="LbH_GlmU_C"/>
    <property type="match status" value="1"/>
</dbReference>
<dbReference type="Gene3D" id="2.160.10.10">
    <property type="entry name" value="Hexapeptide repeat proteins"/>
    <property type="match status" value="1"/>
</dbReference>
<dbReference type="Gene3D" id="3.90.550.10">
    <property type="entry name" value="Spore Coat Polysaccharide Biosynthesis Protein SpsA, Chain A"/>
    <property type="match status" value="1"/>
</dbReference>
<dbReference type="HAMAP" id="MF_01631">
    <property type="entry name" value="GlmU"/>
    <property type="match status" value="1"/>
</dbReference>
<dbReference type="InterPro" id="IPR005882">
    <property type="entry name" value="Bifunctional_GlmU"/>
</dbReference>
<dbReference type="InterPro" id="IPR050065">
    <property type="entry name" value="GlmU-like"/>
</dbReference>
<dbReference type="InterPro" id="IPR038009">
    <property type="entry name" value="GlmU_C_LbH"/>
</dbReference>
<dbReference type="InterPro" id="IPR001451">
    <property type="entry name" value="Hexapep"/>
</dbReference>
<dbReference type="InterPro" id="IPR025877">
    <property type="entry name" value="MobA-like_NTP_Trfase"/>
</dbReference>
<dbReference type="InterPro" id="IPR029044">
    <property type="entry name" value="Nucleotide-diphossugar_trans"/>
</dbReference>
<dbReference type="InterPro" id="IPR011004">
    <property type="entry name" value="Trimer_LpxA-like_sf"/>
</dbReference>
<dbReference type="NCBIfam" id="TIGR01173">
    <property type="entry name" value="glmU"/>
    <property type="match status" value="1"/>
</dbReference>
<dbReference type="NCBIfam" id="NF010940">
    <property type="entry name" value="PRK14360.1"/>
    <property type="match status" value="1"/>
</dbReference>
<dbReference type="PANTHER" id="PTHR43584:SF3">
    <property type="entry name" value="BIFUNCTIONAL PROTEIN GLMU"/>
    <property type="match status" value="1"/>
</dbReference>
<dbReference type="PANTHER" id="PTHR43584">
    <property type="entry name" value="NUCLEOTIDYL TRANSFERASE"/>
    <property type="match status" value="1"/>
</dbReference>
<dbReference type="Pfam" id="PF00132">
    <property type="entry name" value="Hexapep"/>
    <property type="match status" value="2"/>
</dbReference>
<dbReference type="Pfam" id="PF12804">
    <property type="entry name" value="NTP_transf_3"/>
    <property type="match status" value="1"/>
</dbReference>
<dbReference type="SUPFAM" id="SSF53448">
    <property type="entry name" value="Nucleotide-diphospho-sugar transferases"/>
    <property type="match status" value="1"/>
</dbReference>
<dbReference type="SUPFAM" id="SSF51161">
    <property type="entry name" value="Trimeric LpxA-like enzymes"/>
    <property type="match status" value="1"/>
</dbReference>
<comment type="function">
    <text evidence="1">Catalyzes the last two sequential reactions in the de novo biosynthetic pathway for UDP-N-acetylglucosamine (UDP-GlcNAc). The C-terminal domain catalyzes the transfer of acetyl group from acetyl coenzyme A to glucosamine-1-phosphate (GlcN-1-P) to produce N-acetylglucosamine-1-phosphate (GlcNAc-1-P), which is converted into UDP-GlcNAc by the transfer of uridine 5-monophosphate (from uridine 5-triphosphate), a reaction catalyzed by the N-terminal domain.</text>
</comment>
<comment type="catalytic activity">
    <reaction evidence="1">
        <text>alpha-D-glucosamine 1-phosphate + acetyl-CoA = N-acetyl-alpha-D-glucosamine 1-phosphate + CoA + H(+)</text>
        <dbReference type="Rhea" id="RHEA:13725"/>
        <dbReference type="ChEBI" id="CHEBI:15378"/>
        <dbReference type="ChEBI" id="CHEBI:57287"/>
        <dbReference type="ChEBI" id="CHEBI:57288"/>
        <dbReference type="ChEBI" id="CHEBI:57776"/>
        <dbReference type="ChEBI" id="CHEBI:58516"/>
        <dbReference type="EC" id="2.3.1.157"/>
    </reaction>
</comment>
<comment type="catalytic activity">
    <reaction evidence="1">
        <text>N-acetyl-alpha-D-glucosamine 1-phosphate + UTP + H(+) = UDP-N-acetyl-alpha-D-glucosamine + diphosphate</text>
        <dbReference type="Rhea" id="RHEA:13509"/>
        <dbReference type="ChEBI" id="CHEBI:15378"/>
        <dbReference type="ChEBI" id="CHEBI:33019"/>
        <dbReference type="ChEBI" id="CHEBI:46398"/>
        <dbReference type="ChEBI" id="CHEBI:57705"/>
        <dbReference type="ChEBI" id="CHEBI:57776"/>
        <dbReference type="EC" id="2.7.7.23"/>
    </reaction>
</comment>
<comment type="cofactor">
    <cofactor evidence="1">
        <name>Mg(2+)</name>
        <dbReference type="ChEBI" id="CHEBI:18420"/>
    </cofactor>
    <text evidence="1">Binds 1 Mg(2+) ion per subunit.</text>
</comment>
<comment type="pathway">
    <text evidence="1">Nucleotide-sugar biosynthesis; UDP-N-acetyl-alpha-D-glucosamine biosynthesis; N-acetyl-alpha-D-glucosamine 1-phosphate from alpha-D-glucosamine 6-phosphate (route II): step 2/2.</text>
</comment>
<comment type="pathway">
    <text evidence="1">Nucleotide-sugar biosynthesis; UDP-N-acetyl-alpha-D-glucosamine biosynthesis; UDP-N-acetyl-alpha-D-glucosamine from N-acetyl-alpha-D-glucosamine 1-phosphate: step 1/1.</text>
</comment>
<comment type="pathway">
    <text evidence="1">Bacterial outer membrane biogenesis; LPS lipid A biosynthesis.</text>
</comment>
<comment type="subunit">
    <text evidence="1">Homotrimer.</text>
</comment>
<comment type="subcellular location">
    <subcellularLocation>
        <location evidence="1">Cytoplasm</location>
    </subcellularLocation>
</comment>
<comment type="similarity">
    <text evidence="1">In the N-terminal section; belongs to the N-acetylglucosamine-1-phosphate uridyltransferase family.</text>
</comment>
<comment type="similarity">
    <text evidence="1">In the C-terminal section; belongs to the transferase hexapeptide repeat family.</text>
</comment>